<feature type="chain" id="PRO_1000127831" description="ATP synthase epsilon chain">
    <location>
        <begin position="1"/>
        <end position="141"/>
    </location>
</feature>
<protein>
    <recommendedName>
        <fullName evidence="1">ATP synthase epsilon chain</fullName>
    </recommendedName>
    <alternativeName>
        <fullName evidence="1">ATP synthase F1 sector epsilon subunit</fullName>
    </alternativeName>
    <alternativeName>
        <fullName evidence="1">F-ATPase epsilon subunit</fullName>
    </alternativeName>
</protein>
<proteinExistence type="inferred from homology"/>
<accession>B4EEZ0</accession>
<organism>
    <name type="scientific">Burkholderia cenocepacia (strain ATCC BAA-245 / DSM 16553 / LMG 16656 / NCTC 13227 / J2315 / CF5610)</name>
    <name type="common">Burkholderia cepacia (strain J2315)</name>
    <dbReference type="NCBI Taxonomy" id="216591"/>
    <lineage>
        <taxon>Bacteria</taxon>
        <taxon>Pseudomonadati</taxon>
        <taxon>Pseudomonadota</taxon>
        <taxon>Betaproteobacteria</taxon>
        <taxon>Burkholderiales</taxon>
        <taxon>Burkholderiaceae</taxon>
        <taxon>Burkholderia</taxon>
        <taxon>Burkholderia cepacia complex</taxon>
    </lineage>
</organism>
<comment type="function">
    <text evidence="1">Produces ATP from ADP in the presence of a proton gradient across the membrane.</text>
</comment>
<comment type="subunit">
    <text evidence="1">F-type ATPases have 2 components, CF(1) - the catalytic core - and CF(0) - the membrane proton channel. CF(1) has five subunits: alpha(3), beta(3), gamma(1), delta(1), epsilon(1). CF(0) has three main subunits: a, b and c.</text>
</comment>
<comment type="subcellular location">
    <subcellularLocation>
        <location evidence="1">Cell inner membrane</location>
        <topology evidence="1">Peripheral membrane protein</topology>
    </subcellularLocation>
</comment>
<comment type="similarity">
    <text evidence="1">Belongs to the ATPase epsilon chain family.</text>
</comment>
<evidence type="ECO:0000255" key="1">
    <source>
        <dbReference type="HAMAP-Rule" id="MF_00530"/>
    </source>
</evidence>
<gene>
    <name evidence="1" type="primary">atpC</name>
    <name type="ordered locus">BceJ2315_00370</name>
    <name type="ORF">BCAL0037</name>
</gene>
<sequence>MATIKVDVVSAEEQIFSGEAKFVALPGETGELGILPGHTPLITRIRPGAVRIEVEGGNDEFVFVAGGILEVQPGAVTVLADTAIRGKDLDAAKAEEARKRAEETLQNVKSDLDLAKAQSELATAMAQLEAIQRLAKIRSRH</sequence>
<dbReference type="EMBL" id="AM747720">
    <property type="protein sequence ID" value="CAR50343.1"/>
    <property type="molecule type" value="Genomic_DNA"/>
</dbReference>
<dbReference type="RefSeq" id="WP_006482705.1">
    <property type="nucleotide sequence ID" value="NC_011000.1"/>
</dbReference>
<dbReference type="SMR" id="B4EEZ0"/>
<dbReference type="KEGG" id="bcj:BCAL0037"/>
<dbReference type="eggNOG" id="COG0355">
    <property type="taxonomic scope" value="Bacteria"/>
</dbReference>
<dbReference type="HOGENOM" id="CLU_084338_2_0_4"/>
<dbReference type="BioCyc" id="BCEN216591:G1G1V-40-MONOMER"/>
<dbReference type="Proteomes" id="UP000001035">
    <property type="component" value="Chromosome 1"/>
</dbReference>
<dbReference type="GO" id="GO:0005886">
    <property type="term" value="C:plasma membrane"/>
    <property type="evidence" value="ECO:0007669"/>
    <property type="project" value="UniProtKB-SubCell"/>
</dbReference>
<dbReference type="GO" id="GO:0045259">
    <property type="term" value="C:proton-transporting ATP synthase complex"/>
    <property type="evidence" value="ECO:0007669"/>
    <property type="project" value="UniProtKB-KW"/>
</dbReference>
<dbReference type="GO" id="GO:0005524">
    <property type="term" value="F:ATP binding"/>
    <property type="evidence" value="ECO:0007669"/>
    <property type="project" value="UniProtKB-UniRule"/>
</dbReference>
<dbReference type="GO" id="GO:0046933">
    <property type="term" value="F:proton-transporting ATP synthase activity, rotational mechanism"/>
    <property type="evidence" value="ECO:0007669"/>
    <property type="project" value="UniProtKB-UniRule"/>
</dbReference>
<dbReference type="CDD" id="cd12152">
    <property type="entry name" value="F1-ATPase_delta"/>
    <property type="match status" value="1"/>
</dbReference>
<dbReference type="FunFam" id="2.60.15.10:FF:000001">
    <property type="entry name" value="ATP synthase epsilon chain"/>
    <property type="match status" value="1"/>
</dbReference>
<dbReference type="Gene3D" id="1.20.5.440">
    <property type="entry name" value="ATP synthase delta/epsilon subunit, C-terminal domain"/>
    <property type="match status" value="1"/>
</dbReference>
<dbReference type="Gene3D" id="2.60.15.10">
    <property type="entry name" value="F0F1 ATP synthase delta/epsilon subunit, N-terminal"/>
    <property type="match status" value="1"/>
</dbReference>
<dbReference type="HAMAP" id="MF_00530">
    <property type="entry name" value="ATP_synth_epsil_bac"/>
    <property type="match status" value="1"/>
</dbReference>
<dbReference type="InterPro" id="IPR036794">
    <property type="entry name" value="ATP_F1_dsu/esu_C_sf"/>
</dbReference>
<dbReference type="InterPro" id="IPR001469">
    <property type="entry name" value="ATP_synth_F1_dsu/esu"/>
</dbReference>
<dbReference type="InterPro" id="IPR020546">
    <property type="entry name" value="ATP_synth_F1_dsu/esu_N"/>
</dbReference>
<dbReference type="InterPro" id="IPR020547">
    <property type="entry name" value="ATP_synth_F1_esu_C"/>
</dbReference>
<dbReference type="InterPro" id="IPR036771">
    <property type="entry name" value="ATPsynth_dsu/esu_N"/>
</dbReference>
<dbReference type="NCBIfam" id="TIGR01216">
    <property type="entry name" value="ATP_synt_epsi"/>
    <property type="match status" value="1"/>
</dbReference>
<dbReference type="NCBIfam" id="NF001847">
    <property type="entry name" value="PRK00571.1-4"/>
    <property type="match status" value="1"/>
</dbReference>
<dbReference type="PANTHER" id="PTHR13822">
    <property type="entry name" value="ATP SYNTHASE DELTA/EPSILON CHAIN"/>
    <property type="match status" value="1"/>
</dbReference>
<dbReference type="PANTHER" id="PTHR13822:SF10">
    <property type="entry name" value="ATP SYNTHASE EPSILON CHAIN, CHLOROPLASTIC"/>
    <property type="match status" value="1"/>
</dbReference>
<dbReference type="Pfam" id="PF00401">
    <property type="entry name" value="ATP-synt_DE"/>
    <property type="match status" value="1"/>
</dbReference>
<dbReference type="Pfam" id="PF02823">
    <property type="entry name" value="ATP-synt_DE_N"/>
    <property type="match status" value="1"/>
</dbReference>
<dbReference type="SUPFAM" id="SSF46604">
    <property type="entry name" value="Epsilon subunit of F1F0-ATP synthase C-terminal domain"/>
    <property type="match status" value="1"/>
</dbReference>
<dbReference type="SUPFAM" id="SSF51344">
    <property type="entry name" value="Epsilon subunit of F1F0-ATP synthase N-terminal domain"/>
    <property type="match status" value="1"/>
</dbReference>
<keyword id="KW-0066">ATP synthesis</keyword>
<keyword id="KW-0997">Cell inner membrane</keyword>
<keyword id="KW-1003">Cell membrane</keyword>
<keyword id="KW-0139">CF(1)</keyword>
<keyword id="KW-0375">Hydrogen ion transport</keyword>
<keyword id="KW-0406">Ion transport</keyword>
<keyword id="KW-0472">Membrane</keyword>
<keyword id="KW-0813">Transport</keyword>
<name>ATPE_BURCJ</name>
<reference key="1">
    <citation type="journal article" date="2009" name="J. Bacteriol.">
        <title>The genome of Burkholderia cenocepacia J2315, an epidemic pathogen of cystic fibrosis patients.</title>
        <authorList>
            <person name="Holden M.T."/>
            <person name="Seth-Smith H.M."/>
            <person name="Crossman L.C."/>
            <person name="Sebaihia M."/>
            <person name="Bentley S.D."/>
            <person name="Cerdeno-Tarraga A.M."/>
            <person name="Thomson N.R."/>
            <person name="Bason N."/>
            <person name="Quail M.A."/>
            <person name="Sharp S."/>
            <person name="Cherevach I."/>
            <person name="Churcher C."/>
            <person name="Goodhead I."/>
            <person name="Hauser H."/>
            <person name="Holroyd N."/>
            <person name="Mungall K."/>
            <person name="Scott P."/>
            <person name="Walker D."/>
            <person name="White B."/>
            <person name="Rose H."/>
            <person name="Iversen P."/>
            <person name="Mil-Homens D."/>
            <person name="Rocha E.P."/>
            <person name="Fialho A.M."/>
            <person name="Baldwin A."/>
            <person name="Dowson C."/>
            <person name="Barrell B.G."/>
            <person name="Govan J.R."/>
            <person name="Vandamme P."/>
            <person name="Hart C.A."/>
            <person name="Mahenthiralingam E."/>
            <person name="Parkhill J."/>
        </authorList>
    </citation>
    <scope>NUCLEOTIDE SEQUENCE [LARGE SCALE GENOMIC DNA]</scope>
    <source>
        <strain>ATCC BAA-245 / DSM 16553 / LMG 16656 / NCTC 13227 / J2315 / CF5610</strain>
    </source>
</reference>